<proteinExistence type="inferred from homology"/>
<gene>
    <name evidence="1" type="primary">panB</name>
    <name type="ordered locus">Dvul_0789</name>
</gene>
<accession>A1VBJ4</accession>
<name>PANB_NITV4</name>
<reference key="1">
    <citation type="journal article" date="2009" name="Environ. Microbiol.">
        <title>Contribution of mobile genetic elements to Desulfovibrio vulgaris genome plasticity.</title>
        <authorList>
            <person name="Walker C.B."/>
            <person name="Stolyar S."/>
            <person name="Chivian D."/>
            <person name="Pinel N."/>
            <person name="Gabster J.A."/>
            <person name="Dehal P.S."/>
            <person name="He Z."/>
            <person name="Yang Z.K."/>
            <person name="Yen H.C."/>
            <person name="Zhou J."/>
            <person name="Wall J.D."/>
            <person name="Hazen T.C."/>
            <person name="Arkin A.P."/>
            <person name="Stahl D.A."/>
        </authorList>
    </citation>
    <scope>NUCLEOTIDE SEQUENCE [LARGE SCALE GENOMIC DNA]</scope>
    <source>
        <strain>DP4</strain>
    </source>
</reference>
<sequence length="307" mass="32610">MSTHTPPSSATPTSGQGVRPLTTADIRKAKGRQRLAMLTAYDYTSARIVDGAGADLILVGDSLGMVMLGREDTLSVTLDEMLHHCRAVVRGTRHAMVVADMPFMTYETGVRDALLNGARLFRESGVRAVKLEGAGPVLPQVRALVDAGIPVMGHLGLTPQRVAEMGGFKVQGRQAEAALRLFDDALALQEAGCFSLVLECVPAPVAEQVTARLHIPTIGIGAGAGCDGQVLVLHDMLGLYGELSPRFVKRYADLAGMAGEAVARYAHEVREGSFPAAEHTFGIDDGQFEAFMAALDKRGCRQTPTGE</sequence>
<comment type="function">
    <text evidence="1">Catalyzes the reversible reaction in which hydroxymethyl group from 5,10-methylenetetrahydrofolate is transferred onto alpha-ketoisovalerate to form ketopantoate.</text>
</comment>
<comment type="catalytic activity">
    <reaction evidence="1">
        <text>3-methyl-2-oxobutanoate + (6R)-5,10-methylene-5,6,7,8-tetrahydrofolate + H2O = 2-dehydropantoate + (6S)-5,6,7,8-tetrahydrofolate</text>
        <dbReference type="Rhea" id="RHEA:11824"/>
        <dbReference type="ChEBI" id="CHEBI:11561"/>
        <dbReference type="ChEBI" id="CHEBI:11851"/>
        <dbReference type="ChEBI" id="CHEBI:15377"/>
        <dbReference type="ChEBI" id="CHEBI:15636"/>
        <dbReference type="ChEBI" id="CHEBI:57453"/>
        <dbReference type="EC" id="2.1.2.11"/>
    </reaction>
</comment>
<comment type="cofactor">
    <cofactor evidence="1">
        <name>Mg(2+)</name>
        <dbReference type="ChEBI" id="CHEBI:18420"/>
    </cofactor>
    <text evidence="1">Binds 1 Mg(2+) ion per subunit.</text>
</comment>
<comment type="pathway">
    <text evidence="1">Cofactor biosynthesis; (R)-pantothenate biosynthesis; (R)-pantoate from 3-methyl-2-oxobutanoate: step 1/2.</text>
</comment>
<comment type="subunit">
    <text evidence="1">Homodecamer; pentamer of dimers.</text>
</comment>
<comment type="subcellular location">
    <subcellularLocation>
        <location evidence="1">Cytoplasm</location>
    </subcellularLocation>
</comment>
<comment type="similarity">
    <text evidence="1">Belongs to the PanB family.</text>
</comment>
<protein>
    <recommendedName>
        <fullName evidence="1">3-methyl-2-oxobutanoate hydroxymethyltransferase</fullName>
        <ecNumber evidence="1">2.1.2.11</ecNumber>
    </recommendedName>
    <alternativeName>
        <fullName evidence="1">Ketopantoate hydroxymethyltransferase</fullName>
        <shortName evidence="1">KPHMT</shortName>
    </alternativeName>
</protein>
<organism>
    <name type="scientific">Nitratidesulfovibrio vulgaris (strain DP4)</name>
    <name type="common">Desulfovibrio vulgaris</name>
    <dbReference type="NCBI Taxonomy" id="391774"/>
    <lineage>
        <taxon>Bacteria</taxon>
        <taxon>Pseudomonadati</taxon>
        <taxon>Thermodesulfobacteriota</taxon>
        <taxon>Desulfovibrionia</taxon>
        <taxon>Desulfovibrionales</taxon>
        <taxon>Desulfovibrionaceae</taxon>
        <taxon>Nitratidesulfovibrio</taxon>
    </lineage>
</organism>
<dbReference type="EC" id="2.1.2.11" evidence="1"/>
<dbReference type="EMBL" id="CP000527">
    <property type="protein sequence ID" value="ABM27810.1"/>
    <property type="molecule type" value="Genomic_DNA"/>
</dbReference>
<dbReference type="RefSeq" id="WP_010939717.1">
    <property type="nucleotide sequence ID" value="NC_008751.1"/>
</dbReference>
<dbReference type="SMR" id="A1VBJ4"/>
<dbReference type="KEGG" id="dvl:Dvul_0789"/>
<dbReference type="HOGENOM" id="CLU_036645_1_0_7"/>
<dbReference type="UniPathway" id="UPA00028">
    <property type="reaction ID" value="UER00003"/>
</dbReference>
<dbReference type="Proteomes" id="UP000009173">
    <property type="component" value="Chromosome"/>
</dbReference>
<dbReference type="GO" id="GO:0005737">
    <property type="term" value="C:cytoplasm"/>
    <property type="evidence" value="ECO:0007669"/>
    <property type="project" value="UniProtKB-SubCell"/>
</dbReference>
<dbReference type="GO" id="GO:0003864">
    <property type="term" value="F:3-methyl-2-oxobutanoate hydroxymethyltransferase activity"/>
    <property type="evidence" value="ECO:0007669"/>
    <property type="project" value="UniProtKB-UniRule"/>
</dbReference>
<dbReference type="GO" id="GO:0000287">
    <property type="term" value="F:magnesium ion binding"/>
    <property type="evidence" value="ECO:0007669"/>
    <property type="project" value="TreeGrafter"/>
</dbReference>
<dbReference type="GO" id="GO:0015940">
    <property type="term" value="P:pantothenate biosynthetic process"/>
    <property type="evidence" value="ECO:0007669"/>
    <property type="project" value="UniProtKB-UniRule"/>
</dbReference>
<dbReference type="CDD" id="cd06557">
    <property type="entry name" value="KPHMT-like"/>
    <property type="match status" value="1"/>
</dbReference>
<dbReference type="FunFam" id="3.20.20.60:FF:000003">
    <property type="entry name" value="3-methyl-2-oxobutanoate hydroxymethyltransferase"/>
    <property type="match status" value="1"/>
</dbReference>
<dbReference type="Gene3D" id="3.20.20.60">
    <property type="entry name" value="Phosphoenolpyruvate-binding domains"/>
    <property type="match status" value="1"/>
</dbReference>
<dbReference type="HAMAP" id="MF_00156">
    <property type="entry name" value="PanB"/>
    <property type="match status" value="1"/>
</dbReference>
<dbReference type="InterPro" id="IPR003700">
    <property type="entry name" value="Pantoate_hydroxy_MeTrfase"/>
</dbReference>
<dbReference type="InterPro" id="IPR015813">
    <property type="entry name" value="Pyrv/PenolPyrv_kinase-like_dom"/>
</dbReference>
<dbReference type="InterPro" id="IPR040442">
    <property type="entry name" value="Pyrv_kinase-like_dom_sf"/>
</dbReference>
<dbReference type="NCBIfam" id="TIGR00222">
    <property type="entry name" value="panB"/>
    <property type="match status" value="1"/>
</dbReference>
<dbReference type="NCBIfam" id="NF001452">
    <property type="entry name" value="PRK00311.1"/>
    <property type="match status" value="1"/>
</dbReference>
<dbReference type="PANTHER" id="PTHR20881">
    <property type="entry name" value="3-METHYL-2-OXOBUTANOATE HYDROXYMETHYLTRANSFERASE"/>
    <property type="match status" value="1"/>
</dbReference>
<dbReference type="PANTHER" id="PTHR20881:SF0">
    <property type="entry name" value="3-METHYL-2-OXOBUTANOATE HYDROXYMETHYLTRANSFERASE"/>
    <property type="match status" value="1"/>
</dbReference>
<dbReference type="Pfam" id="PF02548">
    <property type="entry name" value="Pantoate_transf"/>
    <property type="match status" value="1"/>
</dbReference>
<dbReference type="PIRSF" id="PIRSF000388">
    <property type="entry name" value="Pantoate_hydroxy_MeTrfase"/>
    <property type="match status" value="1"/>
</dbReference>
<dbReference type="SUPFAM" id="SSF51621">
    <property type="entry name" value="Phosphoenolpyruvate/pyruvate domain"/>
    <property type="match status" value="1"/>
</dbReference>
<feature type="chain" id="PRO_0000297262" description="3-methyl-2-oxobutanoate hydroxymethyltransferase">
    <location>
        <begin position="1"/>
        <end position="307"/>
    </location>
</feature>
<feature type="active site" description="Proton acceptor" evidence="1">
    <location>
        <position position="199"/>
    </location>
</feature>
<feature type="binding site" evidence="1">
    <location>
        <begin position="61"/>
        <end position="62"/>
    </location>
    <ligand>
        <name>3-methyl-2-oxobutanoate</name>
        <dbReference type="ChEBI" id="CHEBI:11851"/>
    </ligand>
</feature>
<feature type="binding site" evidence="1">
    <location>
        <position position="61"/>
    </location>
    <ligand>
        <name>Mg(2+)</name>
        <dbReference type="ChEBI" id="CHEBI:18420"/>
    </ligand>
</feature>
<feature type="binding site" evidence="1">
    <location>
        <position position="100"/>
    </location>
    <ligand>
        <name>3-methyl-2-oxobutanoate</name>
        <dbReference type="ChEBI" id="CHEBI:11851"/>
    </ligand>
</feature>
<feature type="binding site" evidence="1">
    <location>
        <position position="100"/>
    </location>
    <ligand>
        <name>Mg(2+)</name>
        <dbReference type="ChEBI" id="CHEBI:18420"/>
    </ligand>
</feature>
<feature type="binding site" evidence="1">
    <location>
        <position position="130"/>
    </location>
    <ligand>
        <name>3-methyl-2-oxobutanoate</name>
        <dbReference type="ChEBI" id="CHEBI:11851"/>
    </ligand>
</feature>
<feature type="binding site" evidence="1">
    <location>
        <position position="132"/>
    </location>
    <ligand>
        <name>Mg(2+)</name>
        <dbReference type="ChEBI" id="CHEBI:18420"/>
    </ligand>
</feature>
<keyword id="KW-0963">Cytoplasm</keyword>
<keyword id="KW-0460">Magnesium</keyword>
<keyword id="KW-0479">Metal-binding</keyword>
<keyword id="KW-0566">Pantothenate biosynthesis</keyword>
<keyword id="KW-0808">Transferase</keyword>
<evidence type="ECO:0000255" key="1">
    <source>
        <dbReference type="HAMAP-Rule" id="MF_00156"/>
    </source>
</evidence>